<feature type="chain" id="PRO_0000352382" description="5-deoxy-glucuronate isomerase">
    <location>
        <begin position="1"/>
        <end position="271"/>
    </location>
</feature>
<dbReference type="EC" id="5.3.1.30" evidence="1"/>
<dbReference type="EMBL" id="CP000560">
    <property type="protein sequence ID" value="ABS76006.1"/>
    <property type="molecule type" value="Genomic_DNA"/>
</dbReference>
<dbReference type="RefSeq" id="WP_012118847.1">
    <property type="nucleotide sequence ID" value="NC_009725.2"/>
</dbReference>
<dbReference type="SMR" id="A7ZAI0"/>
<dbReference type="GeneID" id="93082816"/>
<dbReference type="KEGG" id="bay:RBAM_036770"/>
<dbReference type="HOGENOM" id="CLU_066438_1_0_9"/>
<dbReference type="UniPathway" id="UPA00076">
    <property type="reaction ID" value="UER00920"/>
</dbReference>
<dbReference type="Proteomes" id="UP000001120">
    <property type="component" value="Chromosome"/>
</dbReference>
<dbReference type="GO" id="GO:0102482">
    <property type="term" value="F:5-deoxy-D-glucuronate isomerase activity"/>
    <property type="evidence" value="ECO:0007669"/>
    <property type="project" value="UniProtKB-EC"/>
</dbReference>
<dbReference type="GO" id="GO:0008880">
    <property type="term" value="F:glucuronate isomerase activity"/>
    <property type="evidence" value="ECO:0007669"/>
    <property type="project" value="InterPro"/>
</dbReference>
<dbReference type="GO" id="GO:0019310">
    <property type="term" value="P:inositol catabolic process"/>
    <property type="evidence" value="ECO:0007669"/>
    <property type="project" value="UniProtKB-UniRule"/>
</dbReference>
<dbReference type="Gene3D" id="2.60.120.10">
    <property type="entry name" value="Jelly Rolls"/>
    <property type="match status" value="2"/>
</dbReference>
<dbReference type="HAMAP" id="MF_01673">
    <property type="entry name" value="IolB"/>
    <property type="match status" value="1"/>
</dbReference>
<dbReference type="InterPro" id="IPR024203">
    <property type="entry name" value="Deoxy-glucuronate_isom_IolB"/>
</dbReference>
<dbReference type="InterPro" id="IPR023770">
    <property type="entry name" value="IolB_Bacilli"/>
</dbReference>
<dbReference type="InterPro" id="IPR021120">
    <property type="entry name" value="KduI/IolB_isomerase"/>
</dbReference>
<dbReference type="InterPro" id="IPR014710">
    <property type="entry name" value="RmlC-like_jellyroll"/>
</dbReference>
<dbReference type="InterPro" id="IPR011051">
    <property type="entry name" value="RmlC_Cupin_sf"/>
</dbReference>
<dbReference type="NCBIfam" id="TIGR04378">
    <property type="entry name" value="myo_inos_iolB"/>
    <property type="match status" value="1"/>
</dbReference>
<dbReference type="PANTHER" id="PTHR39193">
    <property type="entry name" value="5-DEOXY-GLUCURONATE ISOMERASE"/>
    <property type="match status" value="1"/>
</dbReference>
<dbReference type="PANTHER" id="PTHR39193:SF1">
    <property type="entry name" value="5-DEOXY-GLUCURONATE ISOMERASE"/>
    <property type="match status" value="1"/>
</dbReference>
<dbReference type="Pfam" id="PF04962">
    <property type="entry name" value="KduI"/>
    <property type="match status" value="1"/>
</dbReference>
<dbReference type="PIRSF" id="PIRSF036628">
    <property type="entry name" value="IolB"/>
    <property type="match status" value="1"/>
</dbReference>
<dbReference type="SUPFAM" id="SSF51182">
    <property type="entry name" value="RmlC-like cupins"/>
    <property type="match status" value="1"/>
</dbReference>
<reference key="1">
    <citation type="journal article" date="2007" name="Nat. Biotechnol.">
        <title>Comparative analysis of the complete genome sequence of the plant growth-promoting bacterium Bacillus amyloliquefaciens FZB42.</title>
        <authorList>
            <person name="Chen X.H."/>
            <person name="Koumoutsi A."/>
            <person name="Scholz R."/>
            <person name="Eisenreich A."/>
            <person name="Schneider K."/>
            <person name="Heinemeyer I."/>
            <person name="Morgenstern B."/>
            <person name="Voss B."/>
            <person name="Hess W.R."/>
            <person name="Reva O."/>
            <person name="Junge H."/>
            <person name="Voigt B."/>
            <person name="Jungblut P.R."/>
            <person name="Vater J."/>
            <person name="Suessmuth R."/>
            <person name="Liesegang H."/>
            <person name="Strittmatter A."/>
            <person name="Gottschalk G."/>
            <person name="Borriss R."/>
        </authorList>
    </citation>
    <scope>NUCLEOTIDE SEQUENCE [LARGE SCALE GENOMIC DNA]</scope>
    <source>
        <strain>DSM 23117 / BGSC 10A6 / LMG 26770 / FZB42</strain>
    </source>
</reference>
<gene>
    <name evidence="1" type="primary">iolB</name>
    <name type="ordered locus">RBAM_036770</name>
</gene>
<proteinExistence type="inferred from homology"/>
<comment type="function">
    <text evidence="1">Involved in the isomerization of 5-deoxy-glucuronate (5DG) to 5-dehydro-2-deoxy-D-gluconate (DKG or 2-deoxy-5-keto-D-gluconate).</text>
</comment>
<comment type="catalytic activity">
    <reaction evidence="1">
        <text>5-deoxy-D-glucuronate = 5-dehydro-2-deoxy-D-gluconate</text>
        <dbReference type="Rhea" id="RHEA:25840"/>
        <dbReference type="ChEBI" id="CHEBI:16669"/>
        <dbReference type="ChEBI" id="CHEBI:58852"/>
        <dbReference type="EC" id="5.3.1.30"/>
    </reaction>
</comment>
<comment type="pathway">
    <text evidence="1">Polyol metabolism; myo-inositol degradation into acetyl-CoA; acetyl-CoA from myo-inositol: step 4/7.</text>
</comment>
<comment type="similarity">
    <text evidence="1">Belongs to the isomerase IolB family.</text>
</comment>
<keyword id="KW-0413">Isomerase</keyword>
<organism>
    <name type="scientific">Bacillus velezensis (strain DSM 23117 / BGSC 10A6 / LMG 26770 / FZB42)</name>
    <name type="common">Bacillus amyloliquefaciens subsp. plantarum</name>
    <dbReference type="NCBI Taxonomy" id="326423"/>
    <lineage>
        <taxon>Bacteria</taxon>
        <taxon>Bacillati</taxon>
        <taxon>Bacillota</taxon>
        <taxon>Bacilli</taxon>
        <taxon>Bacillales</taxon>
        <taxon>Bacillaceae</taxon>
        <taxon>Bacillus</taxon>
        <taxon>Bacillus amyloliquefaciens group</taxon>
    </lineage>
</organism>
<protein>
    <recommendedName>
        <fullName evidence="1">5-deoxy-glucuronate isomerase</fullName>
        <shortName evidence="1">5DG isomerase</shortName>
        <ecNumber evidence="1">5.3.1.30</ecNumber>
    </recommendedName>
</protein>
<evidence type="ECO:0000255" key="1">
    <source>
        <dbReference type="HAMAP-Rule" id="MF_01673"/>
    </source>
</evidence>
<accession>A7ZAI0</accession>
<name>IOLB_BACVZ</name>
<sequence>MSHLLRKPQADEISQGVNIIHDVTSANSDLKYVGFKVVDLTPGSAYTEDLKKTECCIVAVTGKITVTDYDQTFESIGTRESVFERKPTDSVYVSNDRSFEITAVSGARVALCYSPSEHQLPTKLIKAEDNGVEHRGKLANKRTVHNILPDSDPSANSLLVVEVYTDSGNWSSYPPHKHDQDNLPAESFLEETYYHETDPPQGFVFQRVYTDDRSIDETMTAENENVVIVPAGYHPVGVPDGYTSYYLNVMAGPTRKWKFHNDPAHEWILER</sequence>